<accession>Q6P9G4</accession>
<accession>Q8WUT7</accession>
<accession>Q96MQ8</accession>
<protein>
    <recommendedName>
        <fullName>Transmembrane protein 154</fullName>
    </recommendedName>
</protein>
<name>TM154_HUMAN</name>
<proteinExistence type="evidence at protein level"/>
<comment type="interaction">
    <interactant intactId="EBI-13329239">
        <id>Q6P9G4</id>
    </interactant>
    <interactant intactId="EBI-717654">
        <id>O14569</id>
        <label>CYB561D2</label>
    </interactant>
    <organismsDiffer>false</organismsDiffer>
    <experiments>3</experiments>
</comment>
<comment type="interaction">
    <interactant intactId="EBI-13329239">
        <id>Q6P9G4</id>
    </interactant>
    <interactant intactId="EBI-714482">
        <id>Q9BWH2</id>
        <label>FUNDC2</label>
    </interactant>
    <organismsDiffer>false</organismsDiffer>
    <experiments>3</experiments>
</comment>
<comment type="interaction">
    <interactant intactId="EBI-13329239">
        <id>Q6P9G4</id>
    </interactant>
    <interactant intactId="EBI-713304">
        <id>Q9H0Q3</id>
        <label>FXYD6</label>
    </interactant>
    <organismsDiffer>false</organismsDiffer>
    <experiments>3</experiments>
</comment>
<comment type="interaction">
    <interactant intactId="EBI-13329239">
        <id>Q6P9G4</id>
    </interactant>
    <interactant intactId="EBI-2515857">
        <id>O43681</id>
        <label>GET3</label>
    </interactant>
    <organismsDiffer>false</organismsDiffer>
    <experiments>3</experiments>
</comment>
<comment type="interaction">
    <interactant intactId="EBI-13329239">
        <id>Q6P9G4</id>
    </interactant>
    <interactant intactId="EBI-702665">
        <id>P02724</id>
        <label>GYPA</label>
    </interactant>
    <organismsDiffer>false</organismsDiffer>
    <experiments>3</experiments>
</comment>
<comment type="interaction">
    <interactant intactId="EBI-13329239">
        <id>Q6P9G4</id>
    </interactant>
    <interactant intactId="EBI-8449636">
        <id>P30301</id>
        <label>MIP</label>
    </interactant>
    <organismsDiffer>false</organismsDiffer>
    <experiments>3</experiments>
</comment>
<comment type="interaction">
    <interactant intactId="EBI-13329239">
        <id>Q6P9G4</id>
    </interactant>
    <interactant intactId="EBI-14210385">
        <id>Q59EV6</id>
        <label>PPGB</label>
    </interactant>
    <organismsDiffer>false</organismsDiffer>
    <experiments>3</experiments>
</comment>
<comment type="interaction">
    <interactant intactId="EBI-13329239">
        <id>Q6P9G4</id>
    </interactant>
    <interactant intactId="EBI-347996">
        <id>O43765</id>
        <label>SGTA</label>
    </interactant>
    <organismsDiffer>false</organismsDiffer>
    <experiments>3</experiments>
</comment>
<comment type="interaction">
    <interactant intactId="EBI-13329239">
        <id>Q6P9G4</id>
    </interactant>
    <interactant intactId="EBI-12363689">
        <id>Q96G79</id>
        <label>SLC35A4</label>
    </interactant>
    <organismsDiffer>false</organismsDiffer>
    <experiments>3</experiments>
</comment>
<comment type="interaction">
    <interactant intactId="EBI-13329239">
        <id>Q6P9G4</id>
    </interactant>
    <interactant intactId="EBI-12188413">
        <id>B2RUZ4</id>
        <label>SMIM1</label>
    </interactant>
    <organismsDiffer>false</organismsDiffer>
    <experiments>3</experiments>
</comment>
<comment type="subcellular location">
    <subcellularLocation>
        <location evidence="5">Membrane</location>
        <topology evidence="5">Single-pass type I membrane protein</topology>
    </subcellularLocation>
</comment>
<dbReference type="EMBL" id="AK056590">
    <property type="protein sequence ID" value="BAB71226.1"/>
    <property type="molecule type" value="mRNA"/>
</dbReference>
<dbReference type="EMBL" id="BC019600">
    <property type="protein sequence ID" value="AAH19600.1"/>
    <property type="molecule type" value="mRNA"/>
</dbReference>
<dbReference type="EMBL" id="BC060775">
    <property type="protein sequence ID" value="AAH60775.1"/>
    <property type="molecule type" value="mRNA"/>
</dbReference>
<dbReference type="CCDS" id="CCDS3779.1"/>
<dbReference type="RefSeq" id="NP_689893.1">
    <property type="nucleotide sequence ID" value="NM_152680.3"/>
</dbReference>
<dbReference type="SMR" id="Q6P9G4"/>
<dbReference type="BioGRID" id="128404">
    <property type="interactions" value="41"/>
</dbReference>
<dbReference type="FunCoup" id="Q6P9G4">
    <property type="interactions" value="55"/>
</dbReference>
<dbReference type="IntAct" id="Q6P9G4">
    <property type="interactions" value="38"/>
</dbReference>
<dbReference type="MINT" id="Q6P9G4"/>
<dbReference type="STRING" id="9606.ENSP00000302144"/>
<dbReference type="GlyGen" id="Q6P9G4">
    <property type="glycosylation" value="3 sites, 1 O-linked glycan (3 sites)"/>
</dbReference>
<dbReference type="iPTMnet" id="Q6P9G4"/>
<dbReference type="PhosphoSitePlus" id="Q6P9G4"/>
<dbReference type="BioMuta" id="TMEM154"/>
<dbReference type="DMDM" id="145566965"/>
<dbReference type="jPOST" id="Q6P9G4"/>
<dbReference type="MassIVE" id="Q6P9G4"/>
<dbReference type="PaxDb" id="9606-ENSP00000302144"/>
<dbReference type="PeptideAtlas" id="Q6P9G4"/>
<dbReference type="ProteomicsDB" id="67045"/>
<dbReference type="Antibodypedia" id="67855">
    <property type="antibodies" value="40 antibodies from 13 providers"/>
</dbReference>
<dbReference type="DNASU" id="201799"/>
<dbReference type="Ensembl" id="ENST00000304385.8">
    <property type="protein sequence ID" value="ENSP00000302144.3"/>
    <property type="gene ID" value="ENSG00000170006.13"/>
</dbReference>
<dbReference type="GeneID" id="201799"/>
<dbReference type="KEGG" id="hsa:201799"/>
<dbReference type="MANE-Select" id="ENST00000304385.8">
    <property type="protein sequence ID" value="ENSP00000302144.3"/>
    <property type="RefSeq nucleotide sequence ID" value="NM_152680.3"/>
    <property type="RefSeq protein sequence ID" value="NP_689893.1"/>
</dbReference>
<dbReference type="UCSC" id="uc003imw.3">
    <property type="organism name" value="human"/>
</dbReference>
<dbReference type="AGR" id="HGNC:26489"/>
<dbReference type="CTD" id="201799"/>
<dbReference type="DisGeNET" id="201799"/>
<dbReference type="GeneCards" id="TMEM154"/>
<dbReference type="HGNC" id="HGNC:26489">
    <property type="gene designation" value="TMEM154"/>
</dbReference>
<dbReference type="HPA" id="ENSG00000170006">
    <property type="expression patterns" value="Tissue enhanced (esophagus, skin)"/>
</dbReference>
<dbReference type="neXtProt" id="NX_Q6P9G4"/>
<dbReference type="OpenTargets" id="ENSG00000170006"/>
<dbReference type="PharmGKB" id="PA145007430"/>
<dbReference type="VEuPathDB" id="HostDB:ENSG00000170006"/>
<dbReference type="eggNOG" id="ENOG502SASK">
    <property type="taxonomic scope" value="Eukaryota"/>
</dbReference>
<dbReference type="GeneTree" id="ENSGT00390000016183"/>
<dbReference type="InParanoid" id="Q6P9G4"/>
<dbReference type="OMA" id="MNRSADC"/>
<dbReference type="OrthoDB" id="9451445at2759"/>
<dbReference type="PAN-GO" id="Q6P9G4">
    <property type="GO annotations" value="0 GO annotations based on evolutionary models"/>
</dbReference>
<dbReference type="PhylomeDB" id="Q6P9G4"/>
<dbReference type="TreeFam" id="TF336891"/>
<dbReference type="PathwayCommons" id="Q6P9G4"/>
<dbReference type="SignaLink" id="Q6P9G4"/>
<dbReference type="BioGRID-ORCS" id="201799">
    <property type="hits" value="15 hits in 1151 CRISPR screens"/>
</dbReference>
<dbReference type="ChiTaRS" id="TMEM154">
    <property type="organism name" value="human"/>
</dbReference>
<dbReference type="GenomeRNAi" id="201799"/>
<dbReference type="Pharos" id="Q6P9G4">
    <property type="development level" value="Tdark"/>
</dbReference>
<dbReference type="PRO" id="PR:Q6P9G4"/>
<dbReference type="Proteomes" id="UP000005640">
    <property type="component" value="Chromosome 4"/>
</dbReference>
<dbReference type="RNAct" id="Q6P9G4">
    <property type="molecule type" value="protein"/>
</dbReference>
<dbReference type="Bgee" id="ENSG00000170006">
    <property type="expression patterns" value="Expressed in upper arm skin and 146 other cell types or tissues"/>
</dbReference>
<dbReference type="ExpressionAtlas" id="Q6P9G4">
    <property type="expression patterns" value="baseline and differential"/>
</dbReference>
<dbReference type="GO" id="GO:0016020">
    <property type="term" value="C:membrane"/>
    <property type="evidence" value="ECO:0007669"/>
    <property type="project" value="UniProtKB-SubCell"/>
</dbReference>
<dbReference type="InterPro" id="IPR028064">
    <property type="entry name" value="TMEM154"/>
</dbReference>
<dbReference type="InterPro" id="IPR053087">
    <property type="entry name" value="TMEM154-like"/>
</dbReference>
<dbReference type="PANTHER" id="PTHR36526">
    <property type="entry name" value="TRANSMEMBRANE PROTEIN 154"/>
    <property type="match status" value="1"/>
</dbReference>
<dbReference type="PANTHER" id="PTHR36526:SF1">
    <property type="entry name" value="TRANSMEMBRANE PROTEIN 154"/>
    <property type="match status" value="1"/>
</dbReference>
<dbReference type="Pfam" id="PF15102">
    <property type="entry name" value="TMEM154"/>
    <property type="match status" value="1"/>
</dbReference>
<feature type="signal peptide" evidence="2">
    <location>
        <begin position="1"/>
        <end position="22"/>
    </location>
</feature>
<feature type="chain" id="PRO_0000284503" description="Transmembrane protein 154">
    <location>
        <begin position="23"/>
        <end position="183"/>
    </location>
</feature>
<feature type="topological domain" description="Extracellular" evidence="2">
    <location>
        <begin position="23"/>
        <end position="75"/>
    </location>
</feature>
<feature type="transmembrane region" description="Helical" evidence="2">
    <location>
        <begin position="76"/>
        <end position="96"/>
    </location>
</feature>
<feature type="topological domain" description="Cytoplasmic" evidence="2">
    <location>
        <begin position="97"/>
        <end position="183"/>
    </location>
</feature>
<feature type="region of interest" description="Disordered" evidence="3">
    <location>
        <begin position="163"/>
        <end position="183"/>
    </location>
</feature>
<feature type="modified residue" description="Phosphoserine" evidence="1">
    <location>
        <position position="179"/>
    </location>
</feature>
<feature type="sequence variant" id="VAR_031755" description="In dbSNP:rs17855714." evidence="4">
    <original>S</original>
    <variation>F</variation>
    <location>
        <position position="93"/>
    </location>
</feature>
<sequence length="183" mass="20498">MQAPRAALVFALVIALVPVGRGNYEELENSGDTTVESERPNKVTIPSTFAAVTIKETLNANINSTNFAPDENQLEFILMVLIPLILLVLLLLSVVFLATYYKRKRTKQEPSSQGSQSALQTYELGSENVKVPIFEEDTPSVMEIEMEELDKWMNSMNRNADFECLPTLKEEKESNHNPSDSES</sequence>
<evidence type="ECO:0000250" key="1">
    <source>
        <dbReference type="UniProtKB" id="Q8C4Q9"/>
    </source>
</evidence>
<evidence type="ECO:0000255" key="2"/>
<evidence type="ECO:0000256" key="3">
    <source>
        <dbReference type="SAM" id="MobiDB-lite"/>
    </source>
</evidence>
<evidence type="ECO:0000269" key="4">
    <source>
    </source>
</evidence>
<evidence type="ECO:0000305" key="5"/>
<organism>
    <name type="scientific">Homo sapiens</name>
    <name type="common">Human</name>
    <dbReference type="NCBI Taxonomy" id="9606"/>
    <lineage>
        <taxon>Eukaryota</taxon>
        <taxon>Metazoa</taxon>
        <taxon>Chordata</taxon>
        <taxon>Craniata</taxon>
        <taxon>Vertebrata</taxon>
        <taxon>Euteleostomi</taxon>
        <taxon>Mammalia</taxon>
        <taxon>Eutheria</taxon>
        <taxon>Euarchontoglires</taxon>
        <taxon>Primates</taxon>
        <taxon>Haplorrhini</taxon>
        <taxon>Catarrhini</taxon>
        <taxon>Hominidae</taxon>
        <taxon>Homo</taxon>
    </lineage>
</organism>
<reference key="1">
    <citation type="journal article" date="2004" name="Nat. Genet.">
        <title>Complete sequencing and characterization of 21,243 full-length human cDNAs.</title>
        <authorList>
            <person name="Ota T."/>
            <person name="Suzuki Y."/>
            <person name="Nishikawa T."/>
            <person name="Otsuki T."/>
            <person name="Sugiyama T."/>
            <person name="Irie R."/>
            <person name="Wakamatsu A."/>
            <person name="Hayashi K."/>
            <person name="Sato H."/>
            <person name="Nagai K."/>
            <person name="Kimura K."/>
            <person name="Makita H."/>
            <person name="Sekine M."/>
            <person name="Obayashi M."/>
            <person name="Nishi T."/>
            <person name="Shibahara T."/>
            <person name="Tanaka T."/>
            <person name="Ishii S."/>
            <person name="Yamamoto J."/>
            <person name="Saito K."/>
            <person name="Kawai Y."/>
            <person name="Isono Y."/>
            <person name="Nakamura Y."/>
            <person name="Nagahari K."/>
            <person name="Murakami K."/>
            <person name="Yasuda T."/>
            <person name="Iwayanagi T."/>
            <person name="Wagatsuma M."/>
            <person name="Shiratori A."/>
            <person name="Sudo H."/>
            <person name="Hosoiri T."/>
            <person name="Kaku Y."/>
            <person name="Kodaira H."/>
            <person name="Kondo H."/>
            <person name="Sugawara M."/>
            <person name="Takahashi M."/>
            <person name="Kanda K."/>
            <person name="Yokoi T."/>
            <person name="Furuya T."/>
            <person name="Kikkawa E."/>
            <person name="Omura Y."/>
            <person name="Abe K."/>
            <person name="Kamihara K."/>
            <person name="Katsuta N."/>
            <person name="Sato K."/>
            <person name="Tanikawa M."/>
            <person name="Yamazaki M."/>
            <person name="Ninomiya K."/>
            <person name="Ishibashi T."/>
            <person name="Yamashita H."/>
            <person name="Murakawa K."/>
            <person name="Fujimori K."/>
            <person name="Tanai H."/>
            <person name="Kimata M."/>
            <person name="Watanabe M."/>
            <person name="Hiraoka S."/>
            <person name="Chiba Y."/>
            <person name="Ishida S."/>
            <person name="Ono Y."/>
            <person name="Takiguchi S."/>
            <person name="Watanabe S."/>
            <person name="Yosida M."/>
            <person name="Hotuta T."/>
            <person name="Kusano J."/>
            <person name="Kanehori K."/>
            <person name="Takahashi-Fujii A."/>
            <person name="Hara H."/>
            <person name="Tanase T.-O."/>
            <person name="Nomura Y."/>
            <person name="Togiya S."/>
            <person name="Komai F."/>
            <person name="Hara R."/>
            <person name="Takeuchi K."/>
            <person name="Arita M."/>
            <person name="Imose N."/>
            <person name="Musashino K."/>
            <person name="Yuuki H."/>
            <person name="Oshima A."/>
            <person name="Sasaki N."/>
            <person name="Aotsuka S."/>
            <person name="Yoshikawa Y."/>
            <person name="Matsunawa H."/>
            <person name="Ichihara T."/>
            <person name="Shiohata N."/>
            <person name="Sano S."/>
            <person name="Moriya S."/>
            <person name="Momiyama H."/>
            <person name="Satoh N."/>
            <person name="Takami S."/>
            <person name="Terashima Y."/>
            <person name="Suzuki O."/>
            <person name="Nakagawa S."/>
            <person name="Senoh A."/>
            <person name="Mizoguchi H."/>
            <person name="Goto Y."/>
            <person name="Shimizu F."/>
            <person name="Wakebe H."/>
            <person name="Hishigaki H."/>
            <person name="Watanabe T."/>
            <person name="Sugiyama A."/>
            <person name="Takemoto M."/>
            <person name="Kawakami B."/>
            <person name="Yamazaki M."/>
            <person name="Watanabe K."/>
            <person name="Kumagai A."/>
            <person name="Itakura S."/>
            <person name="Fukuzumi Y."/>
            <person name="Fujimori Y."/>
            <person name="Komiyama M."/>
            <person name="Tashiro H."/>
            <person name="Tanigami A."/>
            <person name="Fujiwara T."/>
            <person name="Ono T."/>
            <person name="Yamada K."/>
            <person name="Fujii Y."/>
            <person name="Ozaki K."/>
            <person name="Hirao M."/>
            <person name="Ohmori Y."/>
            <person name="Kawabata A."/>
            <person name="Hikiji T."/>
            <person name="Kobatake N."/>
            <person name="Inagaki H."/>
            <person name="Ikema Y."/>
            <person name="Okamoto S."/>
            <person name="Okitani R."/>
            <person name="Kawakami T."/>
            <person name="Noguchi S."/>
            <person name="Itoh T."/>
            <person name="Shigeta K."/>
            <person name="Senba T."/>
            <person name="Matsumura K."/>
            <person name="Nakajima Y."/>
            <person name="Mizuno T."/>
            <person name="Morinaga M."/>
            <person name="Sasaki M."/>
            <person name="Togashi T."/>
            <person name="Oyama M."/>
            <person name="Hata H."/>
            <person name="Watanabe M."/>
            <person name="Komatsu T."/>
            <person name="Mizushima-Sugano J."/>
            <person name="Satoh T."/>
            <person name="Shirai Y."/>
            <person name="Takahashi Y."/>
            <person name="Nakagawa K."/>
            <person name="Okumura K."/>
            <person name="Nagase T."/>
            <person name="Nomura N."/>
            <person name="Kikuchi H."/>
            <person name="Masuho Y."/>
            <person name="Yamashita R."/>
            <person name="Nakai K."/>
            <person name="Yada T."/>
            <person name="Nakamura Y."/>
            <person name="Ohara O."/>
            <person name="Isogai T."/>
            <person name="Sugano S."/>
        </authorList>
    </citation>
    <scope>NUCLEOTIDE SEQUENCE [LARGE SCALE MRNA]</scope>
    <source>
        <tissue>Kidney</tissue>
        <tissue>Tongue</tissue>
    </source>
</reference>
<reference key="2">
    <citation type="journal article" date="2004" name="Genome Res.">
        <title>The status, quality, and expansion of the NIH full-length cDNA project: the Mammalian Gene Collection (MGC).</title>
        <authorList>
            <consortium name="The MGC Project Team"/>
        </authorList>
    </citation>
    <scope>NUCLEOTIDE SEQUENCE [LARGE SCALE MRNA]</scope>
    <scope>VARIANT PHE-93</scope>
    <source>
        <tissue>Kidney</tissue>
        <tissue>Placenta</tissue>
    </source>
</reference>
<reference key="3">
    <citation type="journal article" date="2013" name="J. Proteome Res.">
        <title>Toward a comprehensive characterization of a human cancer cell phosphoproteome.</title>
        <authorList>
            <person name="Zhou H."/>
            <person name="Di Palma S."/>
            <person name="Preisinger C."/>
            <person name="Peng M."/>
            <person name="Polat A.N."/>
            <person name="Heck A.J."/>
            <person name="Mohammed S."/>
        </authorList>
    </citation>
    <scope>IDENTIFICATION BY MASS SPECTROMETRY [LARGE SCALE ANALYSIS]</scope>
    <source>
        <tissue>Erythroleukemia</tissue>
    </source>
</reference>
<keyword id="KW-0472">Membrane</keyword>
<keyword id="KW-0597">Phosphoprotein</keyword>
<keyword id="KW-1267">Proteomics identification</keyword>
<keyword id="KW-1185">Reference proteome</keyword>
<keyword id="KW-0732">Signal</keyword>
<keyword id="KW-0812">Transmembrane</keyword>
<keyword id="KW-1133">Transmembrane helix</keyword>
<gene>
    <name type="primary">TMEM154</name>
</gene>